<sequence length="72" mass="8223">MAKEDVIEMQGTVLDTLPNTMFRVELENGHVVTAHISGKMRKNYIRILTGDKVTVEMTPYDLSKGRIVFRAR</sequence>
<accession>Q7MJ42</accession>
<gene>
    <name evidence="1" type="primary">infA</name>
    <name type="ordered locus">VV2321</name>
</gene>
<keyword id="KW-0963">Cytoplasm</keyword>
<keyword id="KW-0396">Initiation factor</keyword>
<keyword id="KW-0648">Protein biosynthesis</keyword>
<keyword id="KW-0694">RNA-binding</keyword>
<keyword id="KW-0699">rRNA-binding</keyword>
<evidence type="ECO:0000255" key="1">
    <source>
        <dbReference type="HAMAP-Rule" id="MF_00075"/>
    </source>
</evidence>
<feature type="chain" id="PRO_0000095905" description="Translation initiation factor IF-1">
    <location>
        <begin position="1"/>
        <end position="72"/>
    </location>
</feature>
<feature type="domain" description="S1-like" evidence="1">
    <location>
        <begin position="1"/>
        <end position="72"/>
    </location>
</feature>
<organism>
    <name type="scientific">Vibrio vulnificus (strain YJ016)</name>
    <dbReference type="NCBI Taxonomy" id="196600"/>
    <lineage>
        <taxon>Bacteria</taxon>
        <taxon>Pseudomonadati</taxon>
        <taxon>Pseudomonadota</taxon>
        <taxon>Gammaproteobacteria</taxon>
        <taxon>Vibrionales</taxon>
        <taxon>Vibrionaceae</taxon>
        <taxon>Vibrio</taxon>
    </lineage>
</organism>
<name>IF1_VIBVY</name>
<comment type="function">
    <text evidence="1">One of the essential components for the initiation of protein synthesis. Stabilizes the binding of IF-2 and IF-3 on the 30S subunit to which N-formylmethionyl-tRNA(fMet) subsequently binds. Helps modulate mRNA selection, yielding the 30S pre-initiation complex (PIC). Upon addition of the 50S ribosomal subunit IF-1, IF-2 and IF-3 are released leaving the mature 70S translation initiation complex.</text>
</comment>
<comment type="subunit">
    <text evidence="1">Component of the 30S ribosomal translation pre-initiation complex which assembles on the 30S ribosome in the order IF-2 and IF-3, IF-1 and N-formylmethionyl-tRNA(fMet); mRNA recruitment can occur at any time during PIC assembly.</text>
</comment>
<comment type="subcellular location">
    <subcellularLocation>
        <location evidence="1">Cytoplasm</location>
    </subcellularLocation>
</comment>
<comment type="similarity">
    <text evidence="1">Belongs to the IF-1 family.</text>
</comment>
<dbReference type="EMBL" id="BA000037">
    <property type="protein sequence ID" value="BAC95085.1"/>
    <property type="molecule type" value="Genomic_DNA"/>
</dbReference>
<dbReference type="RefSeq" id="WP_001040192.1">
    <property type="nucleotide sequence ID" value="NC_005139.1"/>
</dbReference>
<dbReference type="SMR" id="Q7MJ42"/>
<dbReference type="STRING" id="672.VV93_v1c20310"/>
<dbReference type="GeneID" id="97540801"/>
<dbReference type="KEGG" id="vvy:VV2321"/>
<dbReference type="eggNOG" id="COG0361">
    <property type="taxonomic scope" value="Bacteria"/>
</dbReference>
<dbReference type="HOGENOM" id="CLU_151267_1_0_6"/>
<dbReference type="Proteomes" id="UP000002675">
    <property type="component" value="Chromosome I"/>
</dbReference>
<dbReference type="GO" id="GO:0005829">
    <property type="term" value="C:cytosol"/>
    <property type="evidence" value="ECO:0007669"/>
    <property type="project" value="TreeGrafter"/>
</dbReference>
<dbReference type="GO" id="GO:0043022">
    <property type="term" value="F:ribosome binding"/>
    <property type="evidence" value="ECO:0007669"/>
    <property type="project" value="UniProtKB-UniRule"/>
</dbReference>
<dbReference type="GO" id="GO:0019843">
    <property type="term" value="F:rRNA binding"/>
    <property type="evidence" value="ECO:0007669"/>
    <property type="project" value="UniProtKB-UniRule"/>
</dbReference>
<dbReference type="GO" id="GO:0003743">
    <property type="term" value="F:translation initiation factor activity"/>
    <property type="evidence" value="ECO:0007669"/>
    <property type="project" value="UniProtKB-UniRule"/>
</dbReference>
<dbReference type="CDD" id="cd04451">
    <property type="entry name" value="S1_IF1"/>
    <property type="match status" value="1"/>
</dbReference>
<dbReference type="FunFam" id="2.40.50.140:FF:000002">
    <property type="entry name" value="Translation initiation factor IF-1"/>
    <property type="match status" value="1"/>
</dbReference>
<dbReference type="Gene3D" id="2.40.50.140">
    <property type="entry name" value="Nucleic acid-binding proteins"/>
    <property type="match status" value="1"/>
</dbReference>
<dbReference type="HAMAP" id="MF_00075">
    <property type="entry name" value="IF_1"/>
    <property type="match status" value="1"/>
</dbReference>
<dbReference type="InterPro" id="IPR012340">
    <property type="entry name" value="NA-bd_OB-fold"/>
</dbReference>
<dbReference type="InterPro" id="IPR006196">
    <property type="entry name" value="RNA-binding_domain_S1_IF1"/>
</dbReference>
<dbReference type="InterPro" id="IPR003029">
    <property type="entry name" value="S1_domain"/>
</dbReference>
<dbReference type="InterPro" id="IPR004368">
    <property type="entry name" value="TIF_IF1"/>
</dbReference>
<dbReference type="NCBIfam" id="TIGR00008">
    <property type="entry name" value="infA"/>
    <property type="match status" value="1"/>
</dbReference>
<dbReference type="PANTHER" id="PTHR33370">
    <property type="entry name" value="TRANSLATION INITIATION FACTOR IF-1, CHLOROPLASTIC"/>
    <property type="match status" value="1"/>
</dbReference>
<dbReference type="PANTHER" id="PTHR33370:SF1">
    <property type="entry name" value="TRANSLATION INITIATION FACTOR IF-1, CHLOROPLASTIC"/>
    <property type="match status" value="1"/>
</dbReference>
<dbReference type="Pfam" id="PF01176">
    <property type="entry name" value="eIF-1a"/>
    <property type="match status" value="1"/>
</dbReference>
<dbReference type="SMART" id="SM00316">
    <property type="entry name" value="S1"/>
    <property type="match status" value="1"/>
</dbReference>
<dbReference type="SUPFAM" id="SSF50249">
    <property type="entry name" value="Nucleic acid-binding proteins"/>
    <property type="match status" value="1"/>
</dbReference>
<dbReference type="PROSITE" id="PS50832">
    <property type="entry name" value="S1_IF1_TYPE"/>
    <property type="match status" value="1"/>
</dbReference>
<reference key="1">
    <citation type="journal article" date="2003" name="Genome Res.">
        <title>Comparative genome analysis of Vibrio vulnificus, a marine pathogen.</title>
        <authorList>
            <person name="Chen C.-Y."/>
            <person name="Wu K.-M."/>
            <person name="Chang Y.-C."/>
            <person name="Chang C.-H."/>
            <person name="Tsai H.-C."/>
            <person name="Liao T.-L."/>
            <person name="Liu Y.-M."/>
            <person name="Chen H.-J."/>
            <person name="Shen A.B.-T."/>
            <person name="Li J.-C."/>
            <person name="Su T.-L."/>
            <person name="Shao C.-P."/>
            <person name="Lee C.-T."/>
            <person name="Hor L.-I."/>
            <person name="Tsai S.-F."/>
        </authorList>
    </citation>
    <scope>NUCLEOTIDE SEQUENCE [LARGE SCALE GENOMIC DNA]</scope>
    <source>
        <strain>YJ016</strain>
    </source>
</reference>
<proteinExistence type="inferred from homology"/>
<protein>
    <recommendedName>
        <fullName evidence="1">Translation initiation factor IF-1</fullName>
    </recommendedName>
</protein>